<proteinExistence type="evidence at protein level"/>
<gene>
    <name type="primary">CEP290</name>
    <name type="synonym">BBS14</name>
    <name type="synonym">KIAA0373</name>
    <name type="synonym">NPHP6</name>
</gene>
<protein>
    <recommendedName>
        <fullName>Centrosomal protein of 290 kDa</fullName>
        <shortName>Cep290</shortName>
    </recommendedName>
    <alternativeName>
        <fullName>Bardet-Biedl syndrome 14 protein</fullName>
    </alternativeName>
    <alternativeName>
        <fullName>Cancer/testis antigen 87</fullName>
        <shortName>CT87</shortName>
    </alternativeName>
    <alternativeName>
        <fullName>Nephrocystin-6</fullName>
    </alternativeName>
    <alternativeName>
        <fullName>Tumor antigen se2-2</fullName>
    </alternativeName>
</protein>
<comment type="function">
    <text evidence="1 8 13 15 32 34">Involved in early and late steps in cilia formation. Its association with CCP110 is required for inhibition of primary cilia formation by CCP110 (PubMed:18694559). May play a role in early ciliogenesis in the disappearance of centriolar satellites and in the transition of primary ciliar vesicles (PCVs) to capped ciliary vesicles (CCVs). Required for the centrosomal recruitment of RAB8A and for the targeting of centriole satellite proteins to centrosomes such as of PCM1 (PubMed:24421332). Required for the correct localization of ciliary and phototransduction proteins in retinal photoreceptor cells; may play a role in ciliary transport processes (By similarity). Required for efficient recruitment of RAB8A to primary cilium (PubMed:17705300). In the ciliary transition zone is part of the tectonic-like complex which is required for tissue-specific ciliogenesis and may regulate ciliary membrane composition (By similarity). Involved in regulation of the BBSome complex integrity, specifically for presence of BBS2, BBS5 and BBS8/TTC8 in the complex, and in ciliary targeting of selected BBSome cargos. May play a role in controlling entry of the BBSome complex to cilia possibly implicating IQCB1/NPHP5 (PubMed:25552655). Activates ATF4-mediated transcription (PubMed:16682973).</text>
</comment>
<comment type="subunit">
    <text evidence="1 2 8 15 16 17 18 21 24 25 26 27 28 29 30 31 32 33 34 37 39 41 43">Part of the tectonic-like complex (also named B9 complex) (By similarity). Interacts with ATF4 via its N-terminal region (PubMed:16682973). Associates with the BBSome complex (PubMed:25552655, PubMed:23943788), interacting (via N-terminus) with BBS4 (PubMed:23943788). Interacts with IQCB1/NPHP5; IQCB1 and CEP290/NPHP6 are proposed to form a functional NPHP5-6 module localized to the centrosome. Interacts with NPHP4; the interaction likely requires additional interactors. Interacts with ZNF423, FAM161A, CEP162, CEP162, CEP131, TALPID3, CCDC13, CC2D2A, RPGRIP1 (PubMed:18723859, PubMed:18950740, PubMed:20200501, PubMed:21565611, PubMed:22797915, PubMed:22863007, PubMed:22940612, PubMed:23446637, PubMed:23644468, PubMed:24421332, PubMed:24816561). Can self-associate (homo- or heteromeric) (PubMed:18723859). Interacts with CCP110; required for suppressing cilia formation (PubMed:18694559). Interacts with RPGR (By similarity). Associates (via C-terminus) with microtubules (PubMed:24121310, PubMed:24051377); association to microtubule is reduced in response to cellular stress, such as ultraviolet light (UV) radiation or heat shock, in a process that requires p38 MAP kinase signaling (PubMed:24121310). Interacts with FAM161A (By similarity). Interacts with PCM1 (By similarity). Interacts with CCDC66 (PubMed:28235840, PubMed:36606424). Interacts with ARMC9 and CSPP1 (PubMed:32453716).</text>
</comment>
<comment type="interaction">
    <interactant intactId="EBI-1811944">
        <id>O15078</id>
    </interactant>
    <interactant intactId="EBI-752084">
        <id>Q9BUW7</id>
        <label>BBLN</label>
    </interactant>
    <organismsDiffer>false</organismsDiffer>
    <experiments>6</experiments>
</comment>
<comment type="interaction">
    <interactant intactId="EBI-1811944">
        <id>O15078</id>
    </interactant>
    <interactant intactId="EBI-397435">
        <id>P62158</id>
        <label>CALM3</label>
    </interactant>
    <organismsDiffer>false</organismsDiffer>
    <experiments>6</experiments>
</comment>
<comment type="interaction">
    <interactant intactId="EBI-1811944">
        <id>O15078</id>
    </interactant>
    <interactant intactId="EBI-1566217">
        <id>O43303</id>
        <label>CCP110</label>
    </interactant>
    <organismsDiffer>false</organismsDiffer>
    <experiments>18</experiments>
</comment>
<comment type="interaction">
    <interactant intactId="EBI-1811944">
        <id>O15078</id>
    </interactant>
    <interactant intactId="EBI-2558372">
        <id>Q9UPN4</id>
        <label>CEP131</label>
    </interactant>
    <organismsDiffer>false</organismsDiffer>
    <experiments>9</experiments>
</comment>
<comment type="interaction">
    <interactant intactId="EBI-1811944">
        <id>O15078</id>
    </interactant>
    <interactant intactId="EBI-1059012">
        <id>Q5TB80</id>
        <label>CEP162</label>
    </interactant>
    <organismsDiffer>false</organismsDiffer>
    <experiments>7</experiments>
</comment>
<comment type="interaction">
    <interactant intactId="EBI-1811944">
        <id>O15078</id>
    </interactant>
    <interactant intactId="EBI-1811944">
        <id>O15078</id>
        <label>CEP290</label>
    </interactant>
    <organismsDiffer>false</organismsDiffer>
    <experiments>2</experiments>
</comment>
<comment type="interaction">
    <interactant intactId="EBI-1811944">
        <id>O15078</id>
    </interactant>
    <interactant intactId="EBI-2805823">
        <id>Q15051</id>
        <label>IQCB1</label>
    </interactant>
    <organismsDiffer>false</organismsDiffer>
    <experiments>25</experiments>
</comment>
<comment type="interaction">
    <interactant intactId="EBI-1811944">
        <id>O15078</id>
    </interactant>
    <interactant intactId="EBI-3437878">
        <id>Q86T90</id>
        <label>KIAA1328</label>
    </interactant>
    <organismsDiffer>false</organismsDiffer>
    <experiments>3</experiments>
</comment>
<comment type="interaction">
    <interactant intactId="EBI-1811944">
        <id>O15078</id>
    </interactant>
    <interactant intactId="EBI-79165">
        <id>Q9NRD5</id>
        <label>PICK1</label>
    </interactant>
    <organismsDiffer>false</organismsDiffer>
    <experiments>3</experiments>
</comment>
<comment type="interaction">
    <interactant intactId="EBI-1811944">
        <id>O15078</id>
    </interactant>
    <interactant intactId="EBI-950016">
        <id>Q2M1K9</id>
        <label>ZNF423</label>
    </interactant>
    <organismsDiffer>false</organismsDiffer>
    <experiments>3</experiments>
</comment>
<comment type="interaction">
    <interactant intactId="EBI-1811944">
        <id>O15078</id>
    </interactant>
    <interactant intactId="EBI-397530">
        <id>P62161</id>
        <label>Calm3</label>
    </interactant>
    <organismsDiffer>true</organismsDiffer>
    <experiments>2</experiments>
</comment>
<comment type="subcellular location">
    <subcellularLocation>
        <location evidence="6 8 20 21 24">Cytoplasm</location>
        <location evidence="6 8 20 21 24">Cytoskeleton</location>
        <location evidence="6 8 20 21 24">Microtubule organizing center</location>
        <location evidence="6 8 20 21 24">Centrosome</location>
    </subcellularLocation>
    <subcellularLocation>
        <location evidence="13 20 24 29 31">Cytoplasm</location>
        <location evidence="13 20 24 29 31">Cytoskeleton</location>
        <location evidence="13 20 24 29 31">Microtubule organizing center</location>
        <location evidence="13 20 24 29 31">Centrosome</location>
        <location evidence="13 20 24 29 31">Centriolar satellite</location>
    </subcellularLocation>
    <subcellularLocation>
        <location evidence="1">Nucleus</location>
    </subcellularLocation>
    <subcellularLocation>
        <location evidence="29 41">Cell projection</location>
        <location evidence="29 41">Cilium</location>
    </subcellularLocation>
    <subcellularLocation>
        <location evidence="1">Cytoplasm</location>
        <location evidence="1">Cytoskeleton</location>
        <location evidence="1">Cilium basal body</location>
    </subcellularLocation>
    <subcellularLocation>
        <location evidence="24">Cytoplasm</location>
        <location evidence="24">Cytoskeleton</location>
        <location evidence="24">Microtubule organizing center</location>
        <location evidence="24">Centrosome</location>
        <location evidence="24">Centriole</location>
    </subcellularLocation>
    <subcellularLocation>
        <location evidence="42">Cytoplasmic vesicle</location>
    </subcellularLocation>
    <text evidence="1 29 31 41">Displaced from centriolar satellites in response to cellular stress, such as ultraviolet light (UV) radiation or heat shock (PubMed:24121310). Found in the connecting cilium of photoreceptor cells, base of cilium in kidney intramedullary collecting duct cells (By similarity). Localizes at the transition zone, a region between the basal body and the ciliary axoneme (PubMed:23943788, PubMed:36606424). Localization at the ciliary transition zone as well as at centriolar satellites is BBsome-dependent (PubMed:23943788).</text>
</comment>
<comment type="tissue specificity">
    <text evidence="5 8">Ubiquitous. Expressed strongly in placenta and weakly in brain.</text>
</comment>
<comment type="PTM">
    <text evidence="31">Ubiquitinated. May undergo monoubiquitination; monoubiquitination is inhibited in response to cellular stress, such as ultraviolet light (UV) radiation or heat shock, but does not cause its displacement from centriolar satellites.</text>
</comment>
<comment type="disease" evidence="7 8 23 35 36 40">
    <disease id="DI-00608">
        <name>Joubert syndrome 5</name>
        <acronym>JBTS5</acronym>
        <description>A disorder presenting with cerebellar ataxia, oculomotor apraxia, hypotonia, neonatal breathing abnormalities and psychomotor delay. Neuroradiologically, it is characterized by cerebellar vermian hypoplasia/aplasia, thickened and reoriented superior cerebellar peduncles, and an abnormally large interpeduncular fossa, giving the appearance of a molar tooth on transaxial slices (molar tooth sign). Additional variable features include retinal dystrophy and renal disease. Joubert syndrome type 5 shares the neurologic and neuroradiologic features of Joubert syndrome together with severe retinal dystrophy and/or progressive renal failure characterized by nephronophthisis.</description>
        <dbReference type="MIM" id="610188"/>
    </disease>
    <text>The disease is caused by variants affecting the gene represented in this entry.</text>
</comment>
<comment type="disease" evidence="19">
    <disease id="DI-01012">
        <name>Senior-Loken syndrome 6</name>
        <acronym>SLSN6</acronym>
        <description>A renal-retinal disorder characterized by progressive wasting of the filtering unit of the kidney (nephronophthisis), with or without medullary cystic renal disease, and progressive eye disease. Typically this disorder becomes apparent during the first year of life.</description>
        <dbReference type="MIM" id="610189"/>
    </disease>
    <text>The disease is caused by variants affecting the gene represented in this entry.</text>
</comment>
<comment type="disease" evidence="9 19 22">
    <disease id="DI-00637">
        <name>Leber congenital amaurosis 10</name>
        <acronym>LCA10</acronym>
        <description>A severe dystrophy of the retina, typically becoming evident in the first years of life. Visual function is usually poor and often accompanied by nystagmus, sluggish or near-absent pupillary responses, photophobia, high hyperopia and keratoconus.</description>
        <dbReference type="MIM" id="611755"/>
    </disease>
    <text>The disease is caused by variants affecting the gene represented in this entry.</text>
</comment>
<comment type="disease" evidence="11 38 40">
    <disease id="DI-00702">
        <name>Meckel syndrome 4</name>
        <acronym>MKS4</acronym>
        <description>A disorder characterized by a combination of renal cysts and variably associated features including developmental anomalies of the central nervous system (typically encephalocele), hepatic ductal dysplasia and cysts, and polydactyly.</description>
        <dbReference type="MIM" id="611134"/>
    </disease>
    <text>The disease is caused by variants affecting the gene represented in this entry.</text>
</comment>
<comment type="disease">
    <text evidence="5">Antibodies against CEP290 are present in sera from patients with cutaneous T-cell lymphomas, but not in the healthy control population.</text>
</comment>
<comment type="disease" evidence="14">
    <disease id="DI-02607">
        <name>Bardet-Biedl syndrome 14</name>
        <acronym>BBS14</acronym>
        <description>A syndrome characterized by usually severe pigmentary retinopathy, early-onset obesity, polydactyly, hypogenitalism, renal malformation and intellectual disability. Secondary features include diabetes mellitus, hypertension and congenital heart disease. Bardet-Biedl syndrome inheritance is autosomal recessive, but three mutated alleles (two at one locus, and a third at a second locus) may be required for clinical manifestation of some forms of the disease.</description>
        <dbReference type="MIM" id="615991"/>
    </disease>
    <text>The disease is caused by variants affecting the gene represented in this entry.</text>
</comment>
<comment type="sequence caution" evidence="43">
    <conflict type="miscellaneous discrepancy">
        <sequence resource="EMBL-CDS" id="AAG34904"/>
    </conflict>
    <text>Contaminating sequence. Potential poly-A sequence.</text>
</comment>
<comment type="sequence caution" evidence="43">
    <conflict type="frameshift">
        <sequence resource="EMBL" id="AK023677"/>
    </conflict>
</comment>
<comment type="sequence caution" evidence="43">
    <conflict type="miscellaneous discrepancy">
        <sequence resource="EMBL-CDS" id="BAB15196"/>
    </conflict>
    <text>Contaminating sequence. Potential poly-A sequence.</text>
</comment>
<comment type="online information" name="CEP290 Mutation Database">
    <link uri="https://cep290base.cmgg.be/"/>
</comment>
<evidence type="ECO:0000250" key="1">
    <source>
        <dbReference type="UniProtKB" id="Q6A078"/>
    </source>
</evidence>
<evidence type="ECO:0000250" key="2">
    <source>
        <dbReference type="UniProtKB" id="Q9TU23"/>
    </source>
</evidence>
<evidence type="ECO:0000255" key="3"/>
<evidence type="ECO:0000256" key="4">
    <source>
        <dbReference type="SAM" id="MobiDB-lite"/>
    </source>
</evidence>
<evidence type="ECO:0000269" key="5">
    <source>
    </source>
</evidence>
<evidence type="ECO:0000269" key="6">
    <source>
    </source>
</evidence>
<evidence type="ECO:0000269" key="7">
    <source>
    </source>
</evidence>
<evidence type="ECO:0000269" key="8">
    <source>
    </source>
</evidence>
<evidence type="ECO:0000269" key="9">
    <source>
    </source>
</evidence>
<evidence type="ECO:0000269" key="10">
    <source>
    </source>
</evidence>
<evidence type="ECO:0000269" key="11">
    <source>
    </source>
</evidence>
<evidence type="ECO:0000269" key="12">
    <source>
    </source>
</evidence>
<evidence type="ECO:0000269" key="13">
    <source>
    </source>
</evidence>
<evidence type="ECO:0000269" key="14">
    <source>
    </source>
</evidence>
<evidence type="ECO:0000269" key="15">
    <source>
    </source>
</evidence>
<evidence type="ECO:0000269" key="16">
    <source>
    </source>
</evidence>
<evidence type="ECO:0000269" key="17">
    <source>
    </source>
</evidence>
<evidence type="ECO:0000269" key="18">
    <source>
    </source>
</evidence>
<evidence type="ECO:0000269" key="19">
    <source>
    </source>
</evidence>
<evidence type="ECO:0000269" key="20">
    <source>
    </source>
</evidence>
<evidence type="ECO:0000269" key="21">
    <source>
    </source>
</evidence>
<evidence type="ECO:0000269" key="22">
    <source>
    </source>
</evidence>
<evidence type="ECO:0000269" key="23">
    <source>
    </source>
</evidence>
<evidence type="ECO:0000269" key="24">
    <source>
    </source>
</evidence>
<evidence type="ECO:0000269" key="25">
    <source>
    </source>
</evidence>
<evidence type="ECO:0000269" key="26">
    <source>
    </source>
</evidence>
<evidence type="ECO:0000269" key="27">
    <source>
    </source>
</evidence>
<evidence type="ECO:0000269" key="28">
    <source>
    </source>
</evidence>
<evidence type="ECO:0000269" key="29">
    <source>
    </source>
</evidence>
<evidence type="ECO:0000269" key="30">
    <source>
    </source>
</evidence>
<evidence type="ECO:0000269" key="31">
    <source>
    </source>
</evidence>
<evidence type="ECO:0000269" key="32">
    <source>
    </source>
</evidence>
<evidence type="ECO:0000269" key="33">
    <source>
    </source>
</evidence>
<evidence type="ECO:0000269" key="34">
    <source>
    </source>
</evidence>
<evidence type="ECO:0000269" key="35">
    <source>
    </source>
</evidence>
<evidence type="ECO:0000269" key="36">
    <source>
    </source>
</evidence>
<evidence type="ECO:0000269" key="37">
    <source>
    </source>
</evidence>
<evidence type="ECO:0000269" key="38">
    <source>
    </source>
</evidence>
<evidence type="ECO:0000269" key="39">
    <source>
    </source>
</evidence>
<evidence type="ECO:0000269" key="40">
    <source>
    </source>
</evidence>
<evidence type="ECO:0000269" key="41">
    <source>
    </source>
</evidence>
<evidence type="ECO:0000303" key="42">
    <source>
    </source>
</evidence>
<evidence type="ECO:0000305" key="43"/>
<accession>O15078</accession>
<accession>Q1PSK5</accession>
<accession>Q66GS8</accession>
<accession>Q9H2G6</accession>
<accession>Q9H6Q7</accession>
<accession>Q9H8I0</accession>
<feature type="chain" id="PRO_0000089464" description="Centrosomal protein of 290 kDa">
    <location>
        <begin position="1"/>
        <end position="2479"/>
    </location>
</feature>
<feature type="region of interest" description="Self-association (with itself or C-terminus)" evidence="16">
    <location>
        <begin position="1"/>
        <end position="695"/>
    </location>
</feature>
<feature type="region of interest" description="Disordered" evidence="4">
    <location>
        <begin position="149"/>
        <end position="168"/>
    </location>
</feature>
<feature type="region of interest" description="Interaction with IQCB1" evidence="16">
    <location>
        <begin position="696"/>
        <end position="896"/>
    </location>
</feature>
<feature type="region of interest" description="Self-association (with itself or N-terminus)" evidence="16">
    <location>
        <begin position="1966"/>
        <end position="2479"/>
    </location>
</feature>
<feature type="region of interest" description="Disordered" evidence="4">
    <location>
        <begin position="2458"/>
        <end position="2479"/>
    </location>
</feature>
<feature type="coiled-coil region" evidence="3">
    <location>
        <begin position="59"/>
        <end position="565"/>
    </location>
</feature>
<feature type="coiled-coil region" evidence="3">
    <location>
        <begin position="598"/>
        <end position="664"/>
    </location>
</feature>
<feature type="coiled-coil region" evidence="3">
    <location>
        <begin position="697"/>
        <end position="931"/>
    </location>
</feature>
<feature type="coiled-coil region" evidence="3">
    <location>
        <begin position="958"/>
        <end position="1027"/>
    </location>
</feature>
<feature type="coiled-coil region" evidence="3">
    <location>
        <begin position="1071"/>
        <end position="1498"/>
    </location>
</feature>
<feature type="coiled-coil region" evidence="3">
    <location>
        <begin position="1533"/>
        <end position="1584"/>
    </location>
</feature>
<feature type="coiled-coil region" evidence="3">
    <location>
        <begin position="1635"/>
        <end position="2452"/>
    </location>
</feature>
<feature type="compositionally biased region" description="Basic and acidic residues" evidence="4">
    <location>
        <begin position="149"/>
        <end position="163"/>
    </location>
</feature>
<feature type="sequence variant" id="VAR_028356" description="In JBTS5 and SLSN6; dbSNP:rs62635288." evidence="7 19">
    <original>W</original>
    <variation>C</variation>
    <location>
        <position position="7"/>
    </location>
</feature>
<feature type="sequence variant" id="VAR_087592" description="In LCA10; also found in a patient with night blindness and hearing loss." evidence="19 40">
    <location>
        <begin position="108"/>
        <end position="2479"/>
    </location>
</feature>
<feature type="sequence variant" id="VAR_064397" description="In dbSNP:rs45502896." evidence="10">
    <original>E</original>
    <variation>Q</variation>
    <location>
        <position position="277"/>
    </location>
</feature>
<feature type="sequence variant" id="VAR_068168" description="In JBTS5; dbSNP:rs895126773." evidence="23">
    <original>E</original>
    <variation>K</variation>
    <location>
        <position position="534"/>
    </location>
</feature>
<feature type="sequence variant" id="VAR_064398" description="In dbSNP:rs79705698." evidence="10 12">
    <original>D</original>
    <variation>G</variation>
    <location>
        <position position="664"/>
    </location>
</feature>
<feature type="sequence variant" id="VAR_087300" description="In MKS4; uncertain significance; dbSNP:rs1209421607." evidence="38">
    <original>Q</original>
    <variation>L</variation>
    <location>
        <position position="819"/>
    </location>
</feature>
<feature type="sequence variant" id="VAR_031058" description="In dbSNP:rs11104738." evidence="10">
    <original>K</original>
    <variation>E</variation>
    <location>
        <position position="838"/>
    </location>
</feature>
<feature type="sequence variant" id="VAR_087593" description="In LCA10." evidence="19">
    <location>
        <begin position="899"/>
        <end position="2479"/>
    </location>
</feature>
<feature type="sequence variant" id="VAR_031059" description="In dbSNP:rs7970228." evidence="10">
    <original>L</original>
    <variation>W</variation>
    <location>
        <position position="906"/>
    </location>
</feature>
<feature type="sequence variant" id="VAR_031060" description="In dbSNP:rs7307793.">
    <original>R</original>
    <variation>H</variation>
    <location>
        <position position="1237"/>
    </location>
</feature>
<feature type="sequence variant" id="VAR_087594" description="In LCA10, SLSN6 and MKS4." evidence="19 40">
    <location>
        <begin position="1465"/>
        <end position="2479"/>
    </location>
</feature>
<feature type="sequence variant" id="VAR_064399" description="In LCA10; uncertain significance." evidence="19">
    <original>A</original>
    <variation>P</variation>
    <location>
        <position position="1566"/>
    </location>
</feature>
<feature type="sequence variant" id="VAR_087595" description="In LCA10 and SLSN6." evidence="19">
    <location>
        <begin position="1575"/>
        <end position="2479"/>
    </location>
</feature>
<feature type="sequence variant" id="VAR_087301" description="In MKS4; uncertain significance; dbSNP:rs369451049." evidence="38">
    <original>T</original>
    <variation>M</variation>
    <location>
        <position position="1602"/>
    </location>
</feature>
<feature type="sequence variant" id="VAR_064400" description="In LCA10; uncertain significance; dbSNP:rs2036107596." evidence="19">
    <original>L</original>
    <variation>P</variation>
    <location>
        <position position="1694"/>
    </location>
</feature>
<feature type="sequence variant" id="VAR_087596" description="In LCA10." evidence="19">
    <location>
        <begin position="1782"/>
        <end position="2479"/>
    </location>
</feature>
<feature type="sequence variant" id="VAR_031061" description="In dbSNP:rs11104729.">
    <original>I</original>
    <variation>V</variation>
    <location>
        <position position="1836"/>
    </location>
</feature>
<feature type="sequence variant" id="VAR_087302" description="In MKS4 and JBTS5." evidence="38 40">
    <location>
        <begin position="1890"/>
        <end position="2479"/>
    </location>
</feature>
<feature type="sequence variant" id="VAR_075696" description="In JBTS5; benign; dbSNP:rs117852025." evidence="36">
    <original>I</original>
    <variation>T</variation>
    <location>
        <position position="2134"/>
    </location>
</feature>
<feature type="sequence variant" id="VAR_066997" description="In dbSNP:rs374852145." evidence="20">
    <original>R</original>
    <variation>C</variation>
    <location>
        <position position="2210"/>
    </location>
</feature>
<feature type="sequence variant" id="VAR_064401" description="In dbSNP:rs373711746." evidence="10">
    <original>N</original>
    <variation>K</variation>
    <location>
        <position position="2228"/>
    </location>
</feature>
<feature type="sequence variant" id="VAR_067192" description="In LCA10; uncertain significance; dbSNP:rs77778467." evidence="22">
    <original>S</original>
    <variation>G</variation>
    <location>
        <position position="2263"/>
    </location>
</feature>
<feature type="sequence conflict" description="In Ref. 3; AK023677." evidence="43" ref="3">
    <original>S</original>
    <variation>C</variation>
    <location>
        <position position="544"/>
    </location>
</feature>
<feature type="sequence conflict" description="In Ref. 3; AK023677." evidence="43" ref="3">
    <original>E</original>
    <variation>G</variation>
    <location>
        <position position="718"/>
    </location>
</feature>
<reference key="1">
    <citation type="journal article" date="2006" name="Nat. Genet.">
        <title>The centrosomal protein nephrocystin-6 is mutated in Joubert syndrome and activates transcription factor ATF4.</title>
        <authorList>
            <person name="Sayer J.A."/>
            <person name="Otto E.A."/>
            <person name="O'toole J.F."/>
            <person name="Nurnberg G."/>
            <person name="Kennedy M.A."/>
            <person name="Becker C."/>
            <person name="Hennies H.C."/>
            <person name="Helou J."/>
            <person name="Attanasio M."/>
            <person name="Fausett B.V."/>
            <person name="Utsch B."/>
            <person name="Khanna H."/>
            <person name="Liu Y."/>
            <person name="Drummond I."/>
            <person name="Kawakami I."/>
            <person name="Kusakabe T."/>
            <person name="Tsuda M."/>
            <person name="Ma L."/>
            <person name="Lee H."/>
            <person name="Larson R.G."/>
            <person name="Allen S.J."/>
            <person name="Wilkinson C.J."/>
            <person name="Nigg E.A."/>
            <person name="Shou C."/>
            <person name="Lillo C."/>
            <person name="Williams D.S."/>
            <person name="Hoppe B."/>
            <person name="Kemper M.J."/>
            <person name="Neuhaus T."/>
            <person name="Parisi M.A."/>
            <person name="Glass I.A."/>
            <person name="Petry M."/>
            <person name="Kispert A."/>
            <person name="Gloy J."/>
            <person name="Ganner A."/>
            <person name="Walz G."/>
            <person name="Zhu X."/>
            <person name="Goldman D."/>
            <person name="Nurnberg P."/>
            <person name="Swaroop A."/>
            <person name="Leroux M.R."/>
            <person name="Hildebrandt F."/>
        </authorList>
    </citation>
    <scope>NUCLEOTIDE SEQUENCE [MRNA]</scope>
    <scope>FUNCTION</scope>
    <scope>INTERACTION WITH ATF4</scope>
    <scope>SUBCELLULAR LOCATION</scope>
    <scope>TISSUE SPECIFICITY</scope>
    <scope>INVOLVEMENT IN JBTS5 AND SLSN6</scope>
</reference>
<reference key="2">
    <citation type="journal article" date="2006" name="Nature">
        <title>The finished DNA sequence of human chromosome 12.</title>
        <authorList>
            <person name="Scherer S.E."/>
            <person name="Muzny D.M."/>
            <person name="Buhay C.J."/>
            <person name="Chen R."/>
            <person name="Cree A."/>
            <person name="Ding Y."/>
            <person name="Dugan-Rocha S."/>
            <person name="Gill R."/>
            <person name="Gunaratne P."/>
            <person name="Harris R.A."/>
            <person name="Hawes A.C."/>
            <person name="Hernandez J."/>
            <person name="Hodgson A.V."/>
            <person name="Hume J."/>
            <person name="Jackson A."/>
            <person name="Khan Z.M."/>
            <person name="Kovar-Smith C."/>
            <person name="Lewis L.R."/>
            <person name="Lozado R.J."/>
            <person name="Metzker M.L."/>
            <person name="Milosavljevic A."/>
            <person name="Miner G.R."/>
            <person name="Montgomery K.T."/>
            <person name="Morgan M.B."/>
            <person name="Nazareth L.V."/>
            <person name="Scott G."/>
            <person name="Sodergren E."/>
            <person name="Song X.-Z."/>
            <person name="Steffen D."/>
            <person name="Lovering R.C."/>
            <person name="Wheeler D.A."/>
            <person name="Worley K.C."/>
            <person name="Yuan Y."/>
            <person name="Zhang Z."/>
            <person name="Adams C.Q."/>
            <person name="Ansari-Lari M.A."/>
            <person name="Ayele M."/>
            <person name="Brown M.J."/>
            <person name="Chen G."/>
            <person name="Chen Z."/>
            <person name="Clerc-Blankenburg K.P."/>
            <person name="Davis C."/>
            <person name="Delgado O."/>
            <person name="Dinh H.H."/>
            <person name="Draper H."/>
            <person name="Gonzalez-Garay M.L."/>
            <person name="Havlak P."/>
            <person name="Jackson L.R."/>
            <person name="Jacob L.S."/>
            <person name="Kelly S.H."/>
            <person name="Li L."/>
            <person name="Li Z."/>
            <person name="Liu J."/>
            <person name="Liu W."/>
            <person name="Lu J."/>
            <person name="Maheshwari M."/>
            <person name="Nguyen B.-V."/>
            <person name="Okwuonu G.O."/>
            <person name="Pasternak S."/>
            <person name="Perez L.M."/>
            <person name="Plopper F.J.H."/>
            <person name="Santibanez J."/>
            <person name="Shen H."/>
            <person name="Tabor P.E."/>
            <person name="Verduzco D."/>
            <person name="Waldron L."/>
            <person name="Wang Q."/>
            <person name="Williams G.A."/>
            <person name="Zhang J."/>
            <person name="Zhou J."/>
            <person name="Allen C.C."/>
            <person name="Amin A.G."/>
            <person name="Anyalebechi V."/>
            <person name="Bailey M."/>
            <person name="Barbaria J.A."/>
            <person name="Bimage K.E."/>
            <person name="Bryant N.P."/>
            <person name="Burch P.E."/>
            <person name="Burkett C.E."/>
            <person name="Burrell K.L."/>
            <person name="Calderon E."/>
            <person name="Cardenas V."/>
            <person name="Carter K."/>
            <person name="Casias K."/>
            <person name="Cavazos I."/>
            <person name="Cavazos S.R."/>
            <person name="Ceasar H."/>
            <person name="Chacko J."/>
            <person name="Chan S.N."/>
            <person name="Chavez D."/>
            <person name="Christopoulos C."/>
            <person name="Chu J."/>
            <person name="Cockrell R."/>
            <person name="Cox C.D."/>
            <person name="Dang M."/>
            <person name="Dathorne S.R."/>
            <person name="David R."/>
            <person name="Davis C.M."/>
            <person name="Davy-Carroll L."/>
            <person name="Deshazo D.R."/>
            <person name="Donlin J.E."/>
            <person name="D'Souza L."/>
            <person name="Eaves K.A."/>
            <person name="Egan A."/>
            <person name="Emery-Cohen A.J."/>
            <person name="Escotto M."/>
            <person name="Flagg N."/>
            <person name="Forbes L.D."/>
            <person name="Gabisi A.M."/>
            <person name="Garza M."/>
            <person name="Hamilton C."/>
            <person name="Henderson N."/>
            <person name="Hernandez O."/>
            <person name="Hines S."/>
            <person name="Hogues M.E."/>
            <person name="Huang M."/>
            <person name="Idlebird D.G."/>
            <person name="Johnson R."/>
            <person name="Jolivet A."/>
            <person name="Jones S."/>
            <person name="Kagan R."/>
            <person name="King L.M."/>
            <person name="Leal B."/>
            <person name="Lebow H."/>
            <person name="Lee S."/>
            <person name="LeVan J.M."/>
            <person name="Lewis L.C."/>
            <person name="London P."/>
            <person name="Lorensuhewa L.M."/>
            <person name="Loulseged H."/>
            <person name="Lovett D.A."/>
            <person name="Lucier A."/>
            <person name="Lucier R.L."/>
            <person name="Ma J."/>
            <person name="Madu R.C."/>
            <person name="Mapua P."/>
            <person name="Martindale A.D."/>
            <person name="Martinez E."/>
            <person name="Massey E."/>
            <person name="Mawhiney S."/>
            <person name="Meador M.G."/>
            <person name="Mendez S."/>
            <person name="Mercado C."/>
            <person name="Mercado I.C."/>
            <person name="Merritt C.E."/>
            <person name="Miner Z.L."/>
            <person name="Minja E."/>
            <person name="Mitchell T."/>
            <person name="Mohabbat F."/>
            <person name="Mohabbat K."/>
            <person name="Montgomery B."/>
            <person name="Moore N."/>
            <person name="Morris S."/>
            <person name="Munidasa M."/>
            <person name="Ngo R.N."/>
            <person name="Nguyen N.B."/>
            <person name="Nickerson E."/>
            <person name="Nwaokelemeh O.O."/>
            <person name="Nwokenkwo S."/>
            <person name="Obregon M."/>
            <person name="Oguh M."/>
            <person name="Oragunye N."/>
            <person name="Oviedo R.J."/>
            <person name="Parish B.J."/>
            <person name="Parker D.N."/>
            <person name="Parrish J."/>
            <person name="Parks K.L."/>
            <person name="Paul H.A."/>
            <person name="Payton B.A."/>
            <person name="Perez A."/>
            <person name="Perrin W."/>
            <person name="Pickens A."/>
            <person name="Primus E.L."/>
            <person name="Pu L.-L."/>
            <person name="Puazo M."/>
            <person name="Quiles M.M."/>
            <person name="Quiroz J.B."/>
            <person name="Rabata D."/>
            <person name="Reeves K."/>
            <person name="Ruiz S.J."/>
            <person name="Shao H."/>
            <person name="Sisson I."/>
            <person name="Sonaike T."/>
            <person name="Sorelle R.P."/>
            <person name="Sutton A.E."/>
            <person name="Svatek A.F."/>
            <person name="Svetz L.A."/>
            <person name="Tamerisa K.S."/>
            <person name="Taylor T.R."/>
            <person name="Teague B."/>
            <person name="Thomas N."/>
            <person name="Thorn R.D."/>
            <person name="Trejos Z.Y."/>
            <person name="Trevino B.K."/>
            <person name="Ukegbu O.N."/>
            <person name="Urban J.B."/>
            <person name="Vasquez L.I."/>
            <person name="Vera V.A."/>
            <person name="Villasana D.M."/>
            <person name="Wang L."/>
            <person name="Ward-Moore S."/>
            <person name="Warren J.T."/>
            <person name="Wei X."/>
            <person name="White F."/>
            <person name="Williamson A.L."/>
            <person name="Wleczyk R."/>
            <person name="Wooden H.S."/>
            <person name="Wooden S.H."/>
            <person name="Yen J."/>
            <person name="Yoon L."/>
            <person name="Yoon V."/>
            <person name="Zorrilla S.E."/>
            <person name="Nelson D."/>
            <person name="Kucherlapati R."/>
            <person name="Weinstock G."/>
            <person name="Gibbs R.A."/>
        </authorList>
    </citation>
    <scope>NUCLEOTIDE SEQUENCE [LARGE SCALE GENOMIC DNA]</scope>
</reference>
<reference key="3">
    <citation type="journal article" date="2004" name="Nat. Genet.">
        <title>Complete sequencing and characterization of 21,243 full-length human cDNAs.</title>
        <authorList>
            <person name="Ota T."/>
            <person name="Suzuki Y."/>
            <person name="Nishikawa T."/>
            <person name="Otsuki T."/>
            <person name="Sugiyama T."/>
            <person name="Irie R."/>
            <person name="Wakamatsu A."/>
            <person name="Hayashi K."/>
            <person name="Sato H."/>
            <person name="Nagai K."/>
            <person name="Kimura K."/>
            <person name="Makita H."/>
            <person name="Sekine M."/>
            <person name="Obayashi M."/>
            <person name="Nishi T."/>
            <person name="Shibahara T."/>
            <person name="Tanaka T."/>
            <person name="Ishii S."/>
            <person name="Yamamoto J."/>
            <person name="Saito K."/>
            <person name="Kawai Y."/>
            <person name="Isono Y."/>
            <person name="Nakamura Y."/>
            <person name="Nagahari K."/>
            <person name="Murakami K."/>
            <person name="Yasuda T."/>
            <person name="Iwayanagi T."/>
            <person name="Wagatsuma M."/>
            <person name="Shiratori A."/>
            <person name="Sudo H."/>
            <person name="Hosoiri T."/>
            <person name="Kaku Y."/>
            <person name="Kodaira H."/>
            <person name="Kondo H."/>
            <person name="Sugawara M."/>
            <person name="Takahashi M."/>
            <person name="Kanda K."/>
            <person name="Yokoi T."/>
            <person name="Furuya T."/>
            <person name="Kikkawa E."/>
            <person name="Omura Y."/>
            <person name="Abe K."/>
            <person name="Kamihara K."/>
            <person name="Katsuta N."/>
            <person name="Sato K."/>
            <person name="Tanikawa M."/>
            <person name="Yamazaki M."/>
            <person name="Ninomiya K."/>
            <person name="Ishibashi T."/>
            <person name="Yamashita H."/>
            <person name="Murakawa K."/>
            <person name="Fujimori K."/>
            <person name="Tanai H."/>
            <person name="Kimata M."/>
            <person name="Watanabe M."/>
            <person name="Hiraoka S."/>
            <person name="Chiba Y."/>
            <person name="Ishida S."/>
            <person name="Ono Y."/>
            <person name="Takiguchi S."/>
            <person name="Watanabe S."/>
            <person name="Yosida M."/>
            <person name="Hotuta T."/>
            <person name="Kusano J."/>
            <person name="Kanehori K."/>
            <person name="Takahashi-Fujii A."/>
            <person name="Hara H."/>
            <person name="Tanase T.-O."/>
            <person name="Nomura Y."/>
            <person name="Togiya S."/>
            <person name="Komai F."/>
            <person name="Hara R."/>
            <person name="Takeuchi K."/>
            <person name="Arita M."/>
            <person name="Imose N."/>
            <person name="Musashino K."/>
            <person name="Yuuki H."/>
            <person name="Oshima A."/>
            <person name="Sasaki N."/>
            <person name="Aotsuka S."/>
            <person name="Yoshikawa Y."/>
            <person name="Matsunawa H."/>
            <person name="Ichihara T."/>
            <person name="Shiohata N."/>
            <person name="Sano S."/>
            <person name="Moriya S."/>
            <person name="Momiyama H."/>
            <person name="Satoh N."/>
            <person name="Takami S."/>
            <person name="Terashima Y."/>
            <person name="Suzuki O."/>
            <person name="Nakagawa S."/>
            <person name="Senoh A."/>
            <person name="Mizoguchi H."/>
            <person name="Goto Y."/>
            <person name="Shimizu F."/>
            <person name="Wakebe H."/>
            <person name="Hishigaki H."/>
            <person name="Watanabe T."/>
            <person name="Sugiyama A."/>
            <person name="Takemoto M."/>
            <person name="Kawakami B."/>
            <person name="Yamazaki M."/>
            <person name="Watanabe K."/>
            <person name="Kumagai A."/>
            <person name="Itakura S."/>
            <person name="Fukuzumi Y."/>
            <person name="Fujimori Y."/>
            <person name="Komiyama M."/>
            <person name="Tashiro H."/>
            <person name="Tanigami A."/>
            <person name="Fujiwara T."/>
            <person name="Ono T."/>
            <person name="Yamada K."/>
            <person name="Fujii Y."/>
            <person name="Ozaki K."/>
            <person name="Hirao M."/>
            <person name="Ohmori Y."/>
            <person name="Kawabata A."/>
            <person name="Hikiji T."/>
            <person name="Kobatake N."/>
            <person name="Inagaki H."/>
            <person name="Ikema Y."/>
            <person name="Okamoto S."/>
            <person name="Okitani R."/>
            <person name="Kawakami T."/>
            <person name="Noguchi S."/>
            <person name="Itoh T."/>
            <person name="Shigeta K."/>
            <person name="Senba T."/>
            <person name="Matsumura K."/>
            <person name="Nakajima Y."/>
            <person name="Mizuno T."/>
            <person name="Morinaga M."/>
            <person name="Sasaki M."/>
            <person name="Togashi T."/>
            <person name="Oyama M."/>
            <person name="Hata H."/>
            <person name="Watanabe M."/>
            <person name="Komatsu T."/>
            <person name="Mizushima-Sugano J."/>
            <person name="Satoh T."/>
            <person name="Shirai Y."/>
            <person name="Takahashi Y."/>
            <person name="Nakagawa K."/>
            <person name="Okumura K."/>
            <person name="Nagase T."/>
            <person name="Nomura N."/>
            <person name="Kikuchi H."/>
            <person name="Masuho Y."/>
            <person name="Yamashita R."/>
            <person name="Nakai K."/>
            <person name="Yada T."/>
            <person name="Nakamura Y."/>
            <person name="Ohara O."/>
            <person name="Isogai T."/>
            <person name="Sugano S."/>
        </authorList>
    </citation>
    <scope>NUCLEOTIDE SEQUENCE [LARGE SCALE MRNA] OF 1-1058</scope>
    <source>
        <tissue>Hepatoma</tissue>
        <tissue>Placenta</tissue>
    </source>
</reference>
<reference key="4">
    <citation type="journal article" date="1997" name="DNA Res.">
        <title>Prediction of the coding sequences of unidentified human genes. VII. The complete sequences of 100 new cDNA clones from brain which can code for large proteins in vitro.</title>
        <authorList>
            <person name="Nagase T."/>
            <person name="Ishikawa K."/>
            <person name="Nakajima D."/>
            <person name="Ohira M."/>
            <person name="Seki N."/>
            <person name="Miyajima N."/>
            <person name="Tanaka A."/>
            <person name="Kotani H."/>
            <person name="Nomura N."/>
            <person name="Ohara O."/>
        </authorList>
    </citation>
    <scope>NUCLEOTIDE SEQUENCE [LARGE SCALE MRNA] OF 940-2479</scope>
    <source>
        <tissue>Brain</tissue>
    </source>
</reference>
<reference key="5">
    <citation type="journal article" date="2001" name="Proc. Natl. Acad. Sci. U.S.A.">
        <title>Serological detection of cutaneous T-cell lymphoma-associated antigens.</title>
        <authorList>
            <person name="Eichmueller S."/>
            <person name="Usener D."/>
            <person name="Dummer R."/>
            <person name="Stein A."/>
            <person name="Thiel D."/>
            <person name="Schadendorf D."/>
        </authorList>
    </citation>
    <scope>NUCLEOTIDE SEQUENCE [MRNA] OF 1616-2382</scope>
    <scope>TISSUE SPECIFICITY</scope>
    <scope>DISEASE</scope>
    <source>
        <tissue>Testis</tissue>
    </source>
</reference>
<reference key="6">
    <citation type="journal article" date="2003" name="Nature">
        <title>Proteomic characterization of the human centrosome by protein correlation profiling.</title>
        <authorList>
            <person name="Andersen J.S."/>
            <person name="Wilkinson C.J."/>
            <person name="Mayor T."/>
            <person name="Mortensen P."/>
            <person name="Nigg E.A."/>
            <person name="Mann M."/>
        </authorList>
    </citation>
    <scope>IDENTIFICATION BY MASS SPECTROMETRY</scope>
    <scope>SUBCELLULAR LOCATION [LARGE SCALE ANALYSIS]</scope>
    <source>
        <tissue>Lymphoblast</tissue>
    </source>
</reference>
<reference key="7">
    <citation type="journal article" date="2006" name="Am. J. Hum. Genet.">
        <title>Mutations in the CEP290 (NPHP6) gene are a frequent cause of Leber congenital amaurosis.</title>
        <authorList>
            <person name="den Hollander A.I."/>
            <person name="Koenekoop R.K."/>
            <person name="Yzer S."/>
            <person name="Lopez I."/>
            <person name="Arends M.L."/>
            <person name="Voesenek K.E.J."/>
            <person name="Zonneveld M.N."/>
            <person name="Strom T.M."/>
            <person name="Meitinger T."/>
            <person name="Brunner H.G."/>
            <person name="Hoyng C.B."/>
            <person name="van den Born L.I."/>
            <person name="Rohrschneider K."/>
            <person name="Cremers F.P.M."/>
        </authorList>
    </citation>
    <scope>INVOLVEMENT IN LCA10</scope>
</reference>
<reference key="8">
    <citation type="journal article" date="2008" name="Am. J. Hum. Genet.">
        <title>CC2D2A is mutated in Joubert syndrome and interacts with the ciliopathy-associated basal body protein CEP290.</title>
        <authorList>
            <person name="Gorden N.T."/>
            <person name="Arts H.H."/>
            <person name="Parisi M.A."/>
            <person name="Coene K.L.M."/>
            <person name="Letteboer S.J.F."/>
            <person name="van Beersum S.E.C."/>
            <person name="Mans D.A."/>
            <person name="Hikida A."/>
            <person name="Eckert M."/>
            <person name="Knutzen D."/>
            <person name="Alswaid A.F."/>
            <person name="Oezyurek H."/>
            <person name="Dibooglu S."/>
            <person name="Otto E.A."/>
            <person name="Liu Y."/>
            <person name="Davis E.E."/>
            <person name="Hutter C.M."/>
            <person name="Bammler T.K."/>
            <person name="Farin F.M."/>
            <person name="Dorschner M."/>
            <person name="Topcu M."/>
            <person name="Zackai E.H."/>
            <person name="Rosenthal P."/>
            <person name="Owens K.N."/>
            <person name="Katsanis N."/>
            <person name="Vincent J.B."/>
            <person name="Hildebrandt F."/>
            <person name="Rubel E.W."/>
            <person name="Raible D.W."/>
            <person name="Knoers N.V.A.M."/>
            <person name="Chance P.F."/>
            <person name="Roepman R."/>
            <person name="Moens C.B."/>
            <person name="Glass I.A."/>
            <person name="Doherty D."/>
        </authorList>
    </citation>
    <scope>INTERACTION WITH CC2D2A</scope>
</reference>
<reference key="9">
    <citation type="journal article" date="2008" name="Dev. Cell">
        <title>CP110 suppresses primary cilia formation through its interaction with CEP290, a protein deficient in human ciliary disease.</title>
        <authorList>
            <person name="Tsang W.Y."/>
            <person name="Bossard C."/>
            <person name="Khanna H."/>
            <person name="Peraenen J."/>
            <person name="Swaroop A."/>
            <person name="Malhotra V."/>
            <person name="Dynlacht B.D."/>
        </authorList>
    </citation>
    <scope>FUNCTION</scope>
    <scope>INTERACTION WITH CCP110</scope>
</reference>
<reference key="10">
    <citation type="journal article" date="2008" name="Hum. Mol. Genet.">
        <title>Genetic and physical interaction between the NPHP5 and NPHP6 gene products.</title>
        <authorList>
            <person name="Schaefer T."/>
            <person name="Puetz M."/>
            <person name="Lienkamp S."/>
            <person name="Ganner A."/>
            <person name="Bergbreiter A."/>
            <person name="Ramachandran H."/>
            <person name="Gieloff V."/>
            <person name="Gerner M."/>
            <person name="Mattonet C."/>
            <person name="Czarnecki P.G."/>
            <person name="Sayer J.A."/>
            <person name="Otto E.A."/>
            <person name="Hildebrandt F."/>
            <person name="Kramer-Zucker A."/>
            <person name="Walz G."/>
        </authorList>
    </citation>
    <scope>INTERACTION WITH IQCB1</scope>
    <scope>SELF-ASSOCIATION</scope>
</reference>
<reference key="11">
    <citation type="journal article" date="2008" name="Hum. Mutat.">
        <title>Mutations of the CEP290 gene encoding a centrosomal protein cause Meckel-Gruber syndrome.</title>
        <authorList>
            <person name="Frank V."/>
            <person name="den Hollander A.I."/>
            <person name="Bruechle N.O."/>
            <person name="Zonneveld M.N."/>
            <person name="Nuernberg G."/>
            <person name="Becker C."/>
            <person name="Du Bois G."/>
            <person name="Kendziorra H."/>
            <person name="Roosing S."/>
            <person name="Senderek J."/>
            <person name="Nuernberg P."/>
            <person name="Cremers F.P."/>
            <person name="Zerres K."/>
            <person name="Bergmann C."/>
        </authorList>
    </citation>
    <scope>FUNCTION</scope>
    <scope>SUBCELLULAR LOCATION</scope>
</reference>
<reference key="12">
    <citation type="journal article" date="2008" name="Nat. Genet.">
        <title>Hypomorphic mutations in syndromic encephalocele genes are associated with Bardet-Biedl syndrome.</title>
        <authorList>
            <person name="Leitch C.C."/>
            <person name="Zaghloul N.A."/>
            <person name="Davis E.E."/>
            <person name="Stoetzel C."/>
            <person name="Diaz-Font A."/>
            <person name="Rix S."/>
            <person name="Alfadhel M."/>
            <person name="Lewis R.A."/>
            <person name="Eyaid W."/>
            <person name="Banin E."/>
            <person name="Dollfus H."/>
            <person name="Beales P.L."/>
            <person name="Badano J.L."/>
            <person name="Katsanis N."/>
        </authorList>
    </citation>
    <scope>INVOLVEMENT IN BBS14</scope>
</reference>
<reference key="13">
    <citation type="journal article" date="2010" name="Kidney Int.">
        <title>The retinitis pigmentosa GTPase regulator interacting protein 1 (RPGRIP1) links RPGR to the nephronophthisis protein network.</title>
        <authorList>
            <person name="Gerner M."/>
            <person name="Haribaskar R."/>
            <person name="Puetz M."/>
            <person name="Czerwitzki J."/>
            <person name="Walz G."/>
            <person name="Schaefer T."/>
        </authorList>
    </citation>
    <scope>INTERACTION WITH RPGRIP1</scope>
</reference>
<reference key="14">
    <citation type="journal article" date="2011" name="Cell">
        <title>Mapping the NPHP-JBTS-MKS protein network reveals ciliopathy disease genes and pathways.</title>
        <authorList>
            <person name="Sang L."/>
            <person name="Miller J.J."/>
            <person name="Corbit K.C."/>
            <person name="Giles R.H."/>
            <person name="Brauer M.J."/>
            <person name="Otto E.A."/>
            <person name="Baye L.M."/>
            <person name="Wen X."/>
            <person name="Scales S.J."/>
            <person name="Kwong M."/>
            <person name="Huntzicker E.G."/>
            <person name="Sfakianos M.K."/>
            <person name="Sandoval W."/>
            <person name="Bazan J.F."/>
            <person name="Kulkarni P."/>
            <person name="Garcia-Gonzalo F.R."/>
            <person name="Seol A.D."/>
            <person name="O'Toole J.F."/>
            <person name="Held S."/>
            <person name="Reutter H.M."/>
            <person name="Lane W.S."/>
            <person name="Rafiq M.A."/>
            <person name="Noor A."/>
            <person name="Ansar M."/>
            <person name="Devi A.R."/>
            <person name="Sheffield V.C."/>
            <person name="Slusarski D.C."/>
            <person name="Vincent J.B."/>
            <person name="Doherty D.A."/>
            <person name="Hildebrandt F."/>
            <person name="Reiter J.F."/>
            <person name="Jackson P.K."/>
        </authorList>
    </citation>
    <scope>SUBCELLULAR LOCATION</scope>
    <scope>INTERACTION WITH IQCB1</scope>
</reference>
<reference key="15">
    <citation type="journal article" date="2012" name="Cell">
        <title>Exome capture reveals ZNF423 and CEP164 mutations, linking renal ciliopathies to DNA damage response signaling.</title>
        <authorList>
            <person name="Chaki M."/>
            <person name="Airik R."/>
            <person name="Ghosh A.K."/>
            <person name="Giles R.H."/>
            <person name="Chen R."/>
            <person name="Slaats G.G."/>
            <person name="Wang H."/>
            <person name="Hurd T.W."/>
            <person name="Zhou W."/>
            <person name="Cluckey A."/>
            <person name="Gee H.Y."/>
            <person name="Ramaswami G."/>
            <person name="Hong C.J."/>
            <person name="Hamilton B.A."/>
            <person name="Cervenka I."/>
            <person name="Ganji R.S."/>
            <person name="Bryja V."/>
            <person name="Arts H.H."/>
            <person name="van Reeuwijk J."/>
            <person name="Oud M.M."/>
            <person name="Letteboer S.J."/>
            <person name="Roepman R."/>
            <person name="Husson H."/>
            <person name="Ibraghimov-Beskrovnaya O."/>
            <person name="Yasunaga T."/>
            <person name="Walz G."/>
            <person name="Eley L."/>
            <person name="Sayer J.A."/>
            <person name="Schermer B."/>
            <person name="Liebau M.C."/>
            <person name="Benzing T."/>
            <person name="Le Corre S."/>
            <person name="Drummond I."/>
            <person name="Janssen S."/>
            <person name="Allen S.J."/>
            <person name="Natarajan S."/>
            <person name="O'Toole J.F."/>
            <person name="Attanasio M."/>
            <person name="Saunier S."/>
            <person name="Antignac C."/>
            <person name="Koenekoop R.K."/>
            <person name="Ren H."/>
            <person name="Lopez I."/>
            <person name="Nayir A."/>
            <person name="Stoetzel C."/>
            <person name="Dollfus H."/>
            <person name="Massoudi R."/>
            <person name="Gleeson J.G."/>
            <person name="Andreoli S.P."/>
            <person name="Doherty D.G."/>
            <person name="Lindstrad A."/>
            <person name="Golzio C."/>
            <person name="Katsanis N."/>
            <person name="Pape L."/>
            <person name="Abboud E.B."/>
            <person name="Al-Rajhi A.A."/>
            <person name="Lewis R.A."/>
            <person name="Omran H."/>
            <person name="Lee E.Y."/>
            <person name="Wang S."/>
            <person name="Sekiguchi J.M."/>
            <person name="Saunders R."/>
            <person name="Johnson C.A."/>
            <person name="Garner E."/>
            <person name="Vanselow K."/>
            <person name="Andersen J.S."/>
            <person name="Shlomai J."/>
            <person name="Nurnberg G."/>
            <person name="Nurnberg P."/>
            <person name="Levy S."/>
            <person name="Smogorzewska A."/>
            <person name="Otto E.A."/>
            <person name="Hildebrandt F."/>
        </authorList>
    </citation>
    <scope>INTERACTION WITH ZNF423</scope>
</reference>
<reference key="16">
    <citation type="journal article" date="2012" name="Hum. Mol. Genet.">
        <title>FAM161A, associated with retinitis pigmentosa, is a component of the cilia-basal body complex and interacts with proteins involved in ciliopathies.</title>
        <authorList>
            <person name="Di Gioia S.A."/>
            <person name="Letteboer S.J."/>
            <person name="Kostic C."/>
            <person name="Bandah-Rozenfeld D."/>
            <person name="Hetterschijt L."/>
            <person name="Sharon D."/>
            <person name="Arsenijevic Y."/>
            <person name="Roepman R."/>
            <person name="Rivolta C."/>
        </authorList>
    </citation>
    <scope>INTERACTION WITH FAM161A</scope>
</reference>
<reference key="17">
    <citation type="journal article" date="2012" name="J. Cell Sci.">
        <title>The centriolar satellite protein Cep131 is important for genome stability.</title>
        <authorList>
            <person name="Staples C.J."/>
            <person name="Myers K.N."/>
            <person name="Beveridge R.D."/>
            <person name="Patil A.A."/>
            <person name="Lee A.J."/>
            <person name="Swanton C."/>
            <person name="Howell M."/>
            <person name="Boulton S.J."/>
            <person name="Collis S.J."/>
        </authorList>
    </citation>
    <scope>INTERACTION WITH CEP131</scope>
    <scope>SUBCELLULAR LOCATION</scope>
</reference>
<reference key="18">
    <citation type="journal article" date="2013" name="EMBO J.">
        <title>A new cellular stress response that triggers centriolar satellite reorganization and ciliogenesis.</title>
        <authorList>
            <person name="Villumsen B.H."/>
            <person name="Danielsen J.R."/>
            <person name="Povlsen L."/>
            <person name="Sylvestersen K.B."/>
            <person name="Merdes A."/>
            <person name="Beli P."/>
            <person name="Yang Y.G."/>
            <person name="Choudhary C."/>
            <person name="Nielsen M.L."/>
            <person name="Mailand N."/>
            <person name="Bekker-Jensen S."/>
        </authorList>
    </citation>
    <scope>UBIQUITINATION</scope>
    <scope>ASSOCIATION WITH MICROTUBULE</scope>
    <scope>SUBCELLULAR LOCATION</scope>
</reference>
<reference key="19">
    <citation type="journal article" date="2013" name="Hum. Mol. Genet.">
        <title>Pathogenic NPHP5 mutations impair protein interaction with Cep290, a prerequisite for ciliogenesis.</title>
        <authorList>
            <person name="Barbelanne M."/>
            <person name="Song J."/>
            <person name="Ahmadzai M."/>
            <person name="Tsang W.Y."/>
        </authorList>
    </citation>
    <scope>INTERACTION WITH IQCB1</scope>
</reference>
<reference key="20">
    <citation type="journal article" date="2013" name="J. Clin. Invest.">
        <title>Disruption of CEP290 microtubule/membrane-binding domains causes retinal degeneration.</title>
        <authorList>
            <person name="Drivas T.G."/>
            <person name="Holzbaur E.L."/>
            <person name="Bennett J."/>
        </authorList>
    </citation>
    <scope>SUBCELLULAR LOCATION</scope>
    <scope>ASSOCIATION WITH MICROTUBULES</scope>
</reference>
<reference key="21">
    <citation type="journal article" date="2013" name="Nat. Cell Biol.">
        <title>CEP162 is an axoneme-recognition protein promoting ciliary transition zone assembly at the cilia base.</title>
        <authorList>
            <person name="Wang W.J."/>
            <person name="Tay H.G."/>
            <person name="Soni R."/>
            <person name="Perumal G.S."/>
            <person name="Goll M.G."/>
            <person name="Macaluso F.P."/>
            <person name="Asara J.M."/>
            <person name="Amack J.D."/>
            <person name="Bryan Tsou M.F."/>
        </authorList>
    </citation>
    <scope>INTERACTION WITH CEP162</scope>
</reference>
<reference key="22">
    <citation type="journal article" date="2014" name="Hum. Mol. Genet.">
        <title>BBS mutations modify phenotypic expression of CEP290-related ciliopathies.</title>
        <authorList>
            <person name="Zhang Y."/>
            <person name="Seo S."/>
            <person name="Bhattarai S."/>
            <person name="Bugge K."/>
            <person name="Searby C.C."/>
            <person name="Zhang Q."/>
            <person name="Drack A.V."/>
            <person name="Stone E.M."/>
            <person name="Sheffield V.C."/>
        </authorList>
    </citation>
    <scope>INTERACTION WITH BBS4</scope>
    <scope>SUBCELLULAR LOCATION</scope>
</reference>
<reference key="23">
    <citation type="journal article" date="2014" name="J. Cell Biol.">
        <title>The CP110-interacting proteins Talpid3 and Cep290 play overlapping and distinct roles in cilia assembly.</title>
        <authorList>
            <person name="Kobayashi T."/>
            <person name="Kim S."/>
            <person name="Lin Y.C."/>
            <person name="Inoue T."/>
            <person name="Dynlacht B.D."/>
        </authorList>
    </citation>
    <scope>FUNCTION</scope>
    <scope>INTERACTION WITH TALPID3</scope>
</reference>
<reference key="24">
    <citation type="journal article" date="2015" name="Am. J. Hum. Genet.">
        <title>Mutations in KIAA0586 cause lethal ciliopathies ranging from a hydrolethalus phenotype to short-rib polydactyly syndrome.</title>
        <authorList>
            <person name="Alby C."/>
            <person name="Piquand K."/>
            <person name="Huber C."/>
            <person name="Megarbane A."/>
            <person name="Ichkou A."/>
            <person name="Legendre M."/>
            <person name="Pelluard F."/>
            <person name="Encha-Ravazi F."/>
            <person name="Abi-Tayeh G."/>
            <person name="Bessieres B."/>
            <person name="El Chehadeh-Djebbar S."/>
            <person name="Laurent N."/>
            <person name="Faivre L."/>
            <person name="Sztriha L."/>
            <person name="Zombor M."/>
            <person name="Szabo H."/>
            <person name="Failler M."/>
            <person name="Garfa-Traore M."/>
            <person name="Bole C."/>
            <person name="Nitschke P."/>
            <person name="Nizon M."/>
            <person name="Elkhartoufi N."/>
            <person name="Clerget-Darpoux F."/>
            <person name="Munnich A."/>
            <person name="Lyonnet S."/>
            <person name="Vekemans M."/>
            <person name="Saunier S."/>
            <person name="Cormier-Daire V."/>
            <person name="Attie-Bitach T."/>
            <person name="Thomas S."/>
        </authorList>
    </citation>
    <scope>FUNCTION</scope>
    <scope>INVOLVEMENT IN JBTS5</scope>
</reference>
<reference key="25">
    <citation type="journal article" date="2015" name="Hum. Mol. Genet.">
        <title>Nephrocystin proteins NPHP5 and Cep290 regulate BBSome integrity, ciliary trafficking and cargo delivery.</title>
        <authorList>
            <person name="Barbelanne M."/>
            <person name="Hossain D."/>
            <person name="Chan D.P."/>
            <person name="Peraenen J."/>
            <person name="Tsang W.Y."/>
        </authorList>
    </citation>
    <scope>FUNCTION</scope>
    <scope>INTERACTION WITH THE BBSOME COMPLEX AND IQCB1</scope>
</reference>
<reference key="26">
    <citation type="journal article" date="2006" name="Nat. Genet.">
        <title>Mutations in CEP290, which encodes a centrosomal protein, cause pleiotropic forms of Joubert syndrome.</title>
        <authorList>
            <consortium name="International Joubert syndrome related disorders (JSRD) study group"/>
            <person name="Valente E.M."/>
            <person name="Silhavy J.L."/>
            <person name="Brancati F."/>
            <person name="Barrano G."/>
            <person name="Krishnaswami S.R."/>
            <person name="Castori M."/>
            <person name="Lancaster M.A."/>
            <person name="Boltshauser E."/>
            <person name="Boccone L."/>
            <person name="Al-Gazali L."/>
            <person name="Fazzi E."/>
            <person name="Signorini S."/>
            <person name="Louie C.M."/>
            <person name="Bellacchio E."/>
            <person name="Bertini E."/>
            <person name="Dallapiccola B."/>
            <person name="Gleeson J.G."/>
        </authorList>
    </citation>
    <scope>VARIANT JBTS5 CYS-7</scope>
</reference>
<reference key="27">
    <citation type="journal article" date="2007" name="Am. J. Hum. Genet.">
        <title>Pleiotropic effects of CEP290 (NPHP6) mutations extend to Meckel syndrome.</title>
        <authorList>
            <person name="Baala L."/>
            <person name="Audollent S."/>
            <person name="Martinovic J."/>
            <person name="Ozilou C."/>
            <person name="Babron M.-C."/>
            <person name="Sivanandamoorthy S."/>
            <person name="Saunier S."/>
            <person name="Salomon R."/>
            <person name="Gonzales M."/>
            <person name="Rattenberry E."/>
            <person name="Esculpavit C."/>
            <person name="Toutain A."/>
            <person name="Moraine C."/>
            <person name="Parent P."/>
            <person name="Marcorelles P."/>
            <person name="Dauge M.-C."/>
            <person name="Roume J."/>
            <person name="Le Merrer M."/>
            <person name="Meiner V."/>
            <person name="Meir K."/>
            <person name="Menez F."/>
            <person name="Beaufrere A.-M."/>
            <person name="Francannet C."/>
            <person name="Tantau J."/>
            <person name="Sinico M."/>
            <person name="Dumez Y."/>
            <person name="MacDonald F."/>
            <person name="Munnich A."/>
            <person name="Lyonnet S."/>
            <person name="Gubler M.-C."/>
            <person name="Genin E."/>
            <person name="Johnson C.A."/>
            <person name="Vekemans M."/>
            <person name="Encha-Razavi F."/>
            <person name="Attie-Bitach T."/>
        </authorList>
    </citation>
    <scope>INVOLVEMENT IN MKS4</scope>
</reference>
<reference key="28">
    <citation type="journal article" date="2014" name="J. Cell Sci.">
        <title>Ccdc13 is a novel human centriolar satellite protein required for ciliogenesis and genome stability.</title>
        <authorList>
            <person name="Staples C.J."/>
            <person name="Myers K.N."/>
            <person name="Beveridge R.D."/>
            <person name="Patil A.A."/>
            <person name="Howard A.E."/>
            <person name="Barone G."/>
            <person name="Lee A.J."/>
            <person name="Swanton C."/>
            <person name="Howell M."/>
            <person name="Maslen S."/>
            <person name="Skehel J.M."/>
            <person name="Boulton S.J."/>
            <person name="Collis S.J."/>
        </authorList>
    </citation>
    <scope>INTERACTION WITH CCDC13</scope>
</reference>
<reference key="29">
    <citation type="journal article" date="2017" name="J. Cell Sci.">
        <title>The centriolar satellite protein CCDC66 interacts with CEP290 and functions in cilium formation and trafficking.</title>
        <authorList>
            <person name="Conkar D."/>
            <person name="Culfa E."/>
            <person name="Odabasi E."/>
            <person name="Rauniyar N."/>
            <person name="Yates J.R. III"/>
            <person name="Firat-Karalar E.N."/>
        </authorList>
    </citation>
    <scope>INTERACTION WITH CCDC66</scope>
</reference>
<reference key="30">
    <citation type="journal article" date="2020" name="J. Clin. Invest.">
        <title>Dysfunction of the ciliary ARMC9/TOGARAM1 protein module causes Joubert syndrome.</title>
        <authorList>
            <consortium name="University of Washington Center for Mendelian Genomics"/>
            <consortium name="Genomics England Research Consortium"/>
            <person name="Latour B.L."/>
            <person name="Van De Weghe J.C."/>
            <person name="Rusterholz T.D."/>
            <person name="Letteboer S.J."/>
            <person name="Gomez A."/>
            <person name="Shaheen R."/>
            <person name="Gesemann M."/>
            <person name="Karamzade A."/>
            <person name="Asadollahi M."/>
            <person name="Barroso-Gil M."/>
            <person name="Chitre M."/>
            <person name="Grout M.E."/>
            <person name="van Reeuwijk J."/>
            <person name="van Beersum S.E."/>
            <person name="Miller C.V."/>
            <person name="Dempsey J.C."/>
            <person name="Morsy H."/>
            <person name="Bamshad M.J."/>
            <person name="Nickerson D.A."/>
            <person name="Neuhauss S.C."/>
            <person name="Boldt K."/>
            <person name="Ueffing M."/>
            <person name="Keramatipour M."/>
            <person name="Sayer J.A."/>
            <person name="Alkuraya F.S."/>
            <person name="Bachmann-Gagescu R."/>
            <person name="Roepman R."/>
            <person name="Doherty D."/>
        </authorList>
    </citation>
    <scope>INTERACTION WITH ARMC9 AND CSPP1</scope>
</reference>
<reference key="31">
    <citation type="journal article" date="2023" name="J. Cell Sci.">
        <title>CCDC66 regulates primary cilium length and signaling via interactions with transition zone and axonemal proteins.</title>
        <authorList>
            <person name="Odabasi E."/>
            <person name="Conkar D."/>
            <person name="Deretic J."/>
            <person name="Batman U."/>
            <person name="Frikstad K.M."/>
            <person name="Patzke S."/>
            <person name="Firat-Karalar E.N."/>
        </authorList>
    </citation>
    <scope>SUBCELLULAR LOCATION</scope>
    <scope>INTERACTION WITH CCDC66</scope>
</reference>
<reference key="32">
    <citation type="journal article" date="2007" name="Am. J. Hum. Genet.">
        <title>CEP290 mutations are frequently identified in the oculo-renal form of Joubert syndrome-related disorders.</title>
        <authorList>
            <person name="Brancati F."/>
            <person name="Barrano G."/>
            <person name="Silhavy J.L."/>
            <person name="Marsh S.E."/>
            <person name="Travaglini L."/>
            <person name="Bielas S.L."/>
            <person name="Amorini M."/>
            <person name="Zablocka D."/>
            <person name="Kayserili H."/>
            <person name="Al-Gazali L."/>
            <person name="Bertini E."/>
            <person name="Boltshauser E."/>
            <person name="D'Hooghe M."/>
            <person name="Fazzi E."/>
            <person name="Fenerci E.Y."/>
            <person name="Hennekam R.C."/>
            <person name="Kiss A."/>
            <person name="Lees M.M."/>
            <person name="Marco E."/>
            <person name="Phadke S.R."/>
            <person name="Rigoli L."/>
            <person name="Romano S."/>
            <person name="Salpietro C.D."/>
            <person name="Sherr E.H."/>
            <person name="Signorini S."/>
            <person name="Stromme P."/>
            <person name="Stuart B."/>
            <person name="Sztriha L."/>
            <person name="Viskochil D.H."/>
            <person name="Yuksel A."/>
            <person name="Dallapiccola B."/>
            <person name="Valente E.M."/>
            <person name="Gleeson J.G."/>
        </authorList>
    </citation>
    <scope>VARIANTS GLN-277; GLY-664; GLU-838; TRP-906 AND LYS-2228</scope>
</reference>
<reference key="33">
    <citation type="journal article" date="2007" name="J. Med. Genet.">
        <title>Mutation analysis of NPHP6/CEP290 in patients with Joubert syndrome and Senior-Loken syndrome.</title>
        <authorList>
            <person name="Helou J."/>
            <person name="Otto E.A."/>
            <person name="Attanasio M."/>
            <person name="Allen S.J."/>
            <person name="Parisi M.A."/>
            <person name="Glass I."/>
            <person name="Utsch B."/>
            <person name="Hashmi S."/>
            <person name="Fazzi E."/>
            <person name="Omran H."/>
            <person name="O'Toole J.F."/>
            <person name="Sayer J.A."/>
            <person name="Hildebrandt F."/>
        </authorList>
    </citation>
    <scope>VARIANT GLY-664</scope>
</reference>
<reference key="34">
    <citation type="journal article" date="2010" name="Hum. Mutat.">
        <title>Genetic screening of LCA in Belgium: predominance of CEP290 and identification of potential modifier alleles in AHI1 of CEP290-related phenotypes.</title>
        <authorList>
            <person name="Coppieters F."/>
            <person name="Casteels I."/>
            <person name="Meire F."/>
            <person name="De Jaegere S."/>
            <person name="Hooghe S."/>
            <person name="van Regemorter N."/>
            <person name="Van Esch H."/>
            <person name="Matuleviciene A."/>
            <person name="Nunes L."/>
            <person name="Meersschaut V."/>
            <person name="Walraedt S."/>
            <person name="Standaert L."/>
            <person name="Coucke P."/>
            <person name="Hoeben H."/>
            <person name="Kroes H.Y."/>
            <person name="Vande Walle J."/>
            <person name="de Ravel T."/>
            <person name="Leroy B.P."/>
            <person name="De Baere E."/>
        </authorList>
    </citation>
    <scope>VARIANTS SLSN6 CYS-7; 1465-ARG--TYR-2479 DEL AND 1575-LYS--TYR-2479 DEL</scope>
    <scope>VARIANTS LCA10 108-ARG--TYR-2479 DEL; 899-GLN--TYR-2479 DEL; 1465-ARG--TYR-2479 DEL; PRO-1566; 1575-LYS--TYR-2479 DEL; PRO-1694 AND 1782-ARG--TYR-2479 DEL</scope>
</reference>
<reference key="35">
    <citation type="journal article" date="2011" name="Hum. Mol. Genet.">
        <title>B9D1 is revealed as a novel Meckel syndrome (MKS) gene by targeted exon-enriched next-generation sequencing and deletion analysis.</title>
        <authorList>
            <person name="Hopp K."/>
            <person name="Heyer C.M."/>
            <person name="Hommerding C.J."/>
            <person name="Henke S.A."/>
            <person name="Sundsbak J.L."/>
            <person name="Patel S."/>
            <person name="Patel P."/>
            <person name="Consugar M.B."/>
            <person name="Czarnecki P.G."/>
            <person name="Gliem T.J."/>
            <person name="Torres V.E."/>
            <person name="Rossetti S."/>
            <person name="Harris P.C."/>
        </authorList>
    </citation>
    <scope>VARIANT CYS-2210</scope>
    <scope>SUBCELLULAR LOCATION</scope>
</reference>
<reference key="36">
    <citation type="journal article" date="2011" name="PLoS ONE">
        <title>Detection of variants in 15 genes in 87 unrelated Chinese patients with Leber congenital amaurosis.</title>
        <authorList>
            <person name="Li L."/>
            <person name="Xiao X."/>
            <person name="Li S."/>
            <person name="Jia X."/>
            <person name="Wang P."/>
            <person name="Guo X."/>
            <person name="Jiao X."/>
            <person name="Zhang Q."/>
            <person name="Hejtmancik J.F."/>
        </authorList>
    </citation>
    <scope>VARIANT LCA10 GLY-2263</scope>
</reference>
<reference key="37">
    <citation type="journal article" date="2012" name="Am. J. Hum. Genet.">
        <title>Mutations in C5ORF42 cause Joubert syndrome in the French Canadian population.</title>
        <authorList>
            <person name="Srour M."/>
            <person name="Schwartzentruber J."/>
            <person name="Hamdan F.F."/>
            <person name="Ospina L.H."/>
            <person name="Patry L."/>
            <person name="Labuda D."/>
            <person name="Massicotte C."/>
            <person name="Dobrzeniecka S."/>
            <person name="Capo-Chichi J.M."/>
            <person name="Papillon-Cavanagh S."/>
            <person name="Samuels M.E."/>
            <person name="Boycott K.M."/>
            <person name="Shevell M.I."/>
            <person name="Laframboise R."/>
            <person name="Desilets V."/>
            <person name="Maranda B."/>
            <person name="Rouleau G.A."/>
            <person name="Majewski J."/>
            <person name="Michaud J.L."/>
        </authorList>
    </citation>
    <scope>VARIANT JBTS5 LYS-534</scope>
</reference>
<reference key="38">
    <citation type="journal article" date="2015" name="Am. J. Hum. Genet.">
        <title>Joubert Syndrome in French Canadians and Identification of Mutations in CEP104.</title>
        <authorList>
            <consortium name="Care4Rare Canada Consortium"/>
            <person name="Srour M."/>
            <person name="Hamdan F.F."/>
            <person name="McKnight D."/>
            <person name="Davis E."/>
            <person name="Mandel H."/>
            <person name="Schwartzentruber J."/>
            <person name="Martin B."/>
            <person name="Patry L."/>
            <person name="Nassif C."/>
            <person name="Dionne-Laporte A."/>
            <person name="Ospina L.H."/>
            <person name="Lemyre E."/>
            <person name="Massicotte C."/>
            <person name="Laframboise R."/>
            <person name="Maranda B."/>
            <person name="Labuda D."/>
            <person name="Decarie J.C."/>
            <person name="Rypens F."/>
            <person name="Goldsher D."/>
            <person name="Fallet-Bianco C."/>
            <person name="Soucy J.F."/>
            <person name="Laberge A.M."/>
            <person name="Maftei C."/>
            <person name="Boycott K."/>
            <person name="Brais B."/>
            <person name="Boucher R.M."/>
            <person name="Rouleau G.A."/>
            <person name="Katsanis N."/>
            <person name="Majewski J."/>
            <person name="Elpeleg O."/>
            <person name="Kukolich M.K."/>
            <person name="Shalev S."/>
            <person name="Michaud J.L."/>
        </authorList>
    </citation>
    <scope>VARIANT JBTS5 THR-2134</scope>
</reference>
<reference key="39">
    <citation type="journal article" date="2019" name="Clin. Genet.">
        <title>Meckel syndrome: Clinical and mutation profile in six fetuses.</title>
        <authorList>
            <person name="Radhakrishnan P."/>
            <person name="Nayak S.S."/>
            <person name="Shukla A."/>
            <person name="Lindstrand A."/>
            <person name="Girisha K.M."/>
        </authorList>
    </citation>
    <scope>VARIANTS MKS4 LEU-819; MET-1602 AND 1890-GLY--TYR-2479 DEL</scope>
</reference>
<reference key="40">
    <citation type="journal article" date="2021" name="Arch. Iran. Med.">
        <title>CEP104 and CEP290; Genes with Ciliary Functions Cause Intellectual Disability in Multiple Families.</title>
        <authorList>
            <person name="Khoshbakht S."/>
            <person name="Beheshtian M."/>
            <person name="Fattahi Z."/>
            <person name="Bazazzadegan N."/>
            <person name="Parsimehr E."/>
            <person name="Fadaee M."/>
            <person name="Vazehan R."/>
            <person name="Faraji Zonooz M."/>
            <person name="Abolhassani A."/>
            <person name="Makvand M."/>
            <person name="Kariminejad A."/>
            <person name="Celik A."/>
            <person name="Kahrizi K."/>
            <person name="Najmabadi H."/>
        </authorList>
    </citation>
    <scope>VARIANT 108-ARG--TYR-2479 DEL</scope>
    <scope>VARIANT MKS4 1465-ARG--TYR-2479 DEL</scope>
    <scope>VARIANT JBTS5 1890-GLY--TYR-2479 DEL</scope>
</reference>
<sequence length="2479" mass="290386">MPPNINWKEIMKVDPDDLPRQEELADNLLISLSKVEVNELKSEKQENVIHLFRITQSLMKMKAQEVELALEEVEKAGEEQAKFENQLKTKVMKLENELEMAQQSAGGRDTRFLRNEICQLEKQLEQKDRELEDMEKELEKEKKVNEQLALRNEEAENENSKLRRENKRLKKKNEQLCQDIIDYQKQIDSQKETLLSRRGEDSDYRSQLSKKNYELIQYLDEIQTLTEANEKIEVQNQEMRKNLEESVQEMEKMTDEYNRMKAIVHQTDNVIDQLKKENDHYQLQVQELTDLLKSKNEEDDPIMVAVNAKVEEWKLILSSKDDEIIEYQQMLHNLREKLKNAQLDADKSNVMALQQGIQERDSQIKMLTEQVEQYTKEMEKNTCIIEDLKNELQRNKGASTLSQQTHMKIQSTLDILKEKTKEAERTAELAEADAREKDKELVEALKRLKDYESGVYGLEDAVVEIKNCKNQIKIRDREIEILTKEINKLELKISDFLDENEALRERVGLEPKTMIDLTEFRNSKHLKQQQYRAENQILLKEIESLEEERLDLKKKIRQMAQERGKRSATSGLTTEDLNLTENISQGDRISERKLDLLSLKNMSEAQSKNEFLSRELIEKERDLERSRTVIAKFQNKLKELVEENKQLEEGMKEILQAIKEMQKDPDVKGGETSLIIPSLERLVNAIESKNAEGIFDASLHLKAQVDQLTGRNEELRQELRESRKEAINYSQQLAKANLKIDHLEKETSLLRQSEGSNVVFKGIDLPDGIAPSSASIINSQNEYLIHLLQELENKEKKLKNLEDSLEDYNRKFAVIRHQQSLLYKEYLSEKETWKTESKTIKEEKRKLEDQVQQDAIKVKEYNNLLNALQMDSDEMKKILAENSRKITVLQVNEKSLIRQYTTLVELERQLRKENEKQKNELLSMEAEVCEKIGCLQRFKEMAIFKIAALQKVVDNSVSLSELELANKQYNELTAKYRDILQKDNMLVQRTSNLEHLECENISLKEQVESINKELEITKEKLHTIEQAWEQETKLGNESSMDKAKKSITNSDIVSISKKITMLEMKELNERQRAEHCQKMYEHLRTSLKQMEERNFELETKFAELTKINLDAQKVEQMLRDELADSVSKAVSDADRQRILELEKNEMELKVEVSKLREISDIARRQVEILNAQQQSRDKEVESLRMQLLDYQAQSDEKSLIAKLHQHNVSLQLSEATALGKLESITSKLQKMEAYNLRLEQKLDEKEQALYYARLEGRNRAKHLRQTIQSLRRQFSGALPLAQQEKFSKTMIQLQNDKLKIMQEMKNSQQEHRNMENKTLEMELKLKGLEELISTLKDTKGAQKVINWHMKIEELRLQELKLNRELVKDKEEIKYLNNIISEYERTISSLEEEIVQQNKFHEERQMAWDQREVDLERQLDIFDRQQNEILNAAQKFEEATGSIPDPSLPLPNQLEIALRKIKENIRIILETRATCKSLEEKLKEKESALRLAEQNILSRDKVINELRLRLPATAEREKLIAELGRKEMEPKSHHTLKIAHQTIANMQARLNQKEEVLKKYQRLLEKAREEQREIVKKHEEDLHILHHRLELQADSSLNKFKQTAWDLMKQSPTPVPTNKHFIRLAEMEQTVAEQDDSLSSLLVKLKKVSQDLERQREITELKVKEFENIKLQLQENHEDEVKKVKAEVEDLKYLLDQSQKESQCLKSELQAQKEANSRAPTTTMRNLVERLKSQLALKEKQQKALSRALLELRAEMTAAAEERIISATSQKEAHLNVQQIVDRHTRELKTQVEDLNENLLKLKEALKTSKNRENSLTDNLNDLNNELQKKQKAYNKILREKEEIDQENDELKRQIKRLTSGLQGKPLTDNKQSLIEELQRKVKKLENQLEGKVEEVDLKPMKEKNAKEELIRWEEGKKWQAKIEGIRNKLKEKEGEVFTLTKQLNTLKDLFAKADKEKLTLQRKLKTTGMTVDQVLGIRALESEKELEELKKRNLDLENDILYMRAHQALPRDSVVEDLHLQNRYLQEKLHALEKQFSKDTYSKPSISGIESDDHCQREQELQKENLKLSSENIELKFQLEQANKDLPRLKNQVRDLKEMCEFLKKEKAEVQRKLGHVRGSGRSGKTIPELEKTIGLMKKVVEKVQRENEQLKKASGILTSEKMANIEQENEKLKAELEKLKAHLGHQLSMHYESKTKGTEKIIAENERLRKELKKETDAAEKLRIAKNNLEILNEKMTVQLEETGKRLQFAESRGPQLEGADSKSWKSIVVTRMYETKLKELETDIAKKNQSITDLKQLVKEATEREQKVNKYNEDLEQQIKILKHVPEGAETEQGLKRELQVLRLANHQLDKEKAELIHQIEANKDQSGAESTIPDADQLKEKIKDLETQLKMSDLEKQHLKEEIKKLKKELENFDPSFFEEIEDLKYNYKEEVKKNILLEEKVKKLSEQLGVELTSPVAASEEFEDEEESPVNFPIY</sequence>
<organism>
    <name type="scientific">Homo sapiens</name>
    <name type="common">Human</name>
    <dbReference type="NCBI Taxonomy" id="9606"/>
    <lineage>
        <taxon>Eukaryota</taxon>
        <taxon>Metazoa</taxon>
        <taxon>Chordata</taxon>
        <taxon>Craniata</taxon>
        <taxon>Vertebrata</taxon>
        <taxon>Euteleostomi</taxon>
        <taxon>Mammalia</taxon>
        <taxon>Eutheria</taxon>
        <taxon>Euarchontoglires</taxon>
        <taxon>Primates</taxon>
        <taxon>Haplorrhini</taxon>
        <taxon>Catarrhini</taxon>
        <taxon>Hominidae</taxon>
        <taxon>Homo</taxon>
    </lineage>
</organism>
<dbReference type="EMBL" id="DQ109808">
    <property type="protein sequence ID" value="AAZ83370.1"/>
    <property type="molecule type" value="mRNA"/>
</dbReference>
<dbReference type="EMBL" id="AC091516">
    <property type="status" value="NOT_ANNOTATED_CDS"/>
    <property type="molecule type" value="Genomic_DNA"/>
</dbReference>
<dbReference type="EMBL" id="AB002371">
    <property type="protein sequence ID" value="BAA20828.2"/>
    <property type="molecule type" value="mRNA"/>
</dbReference>
<dbReference type="EMBL" id="AK023677">
    <property type="status" value="NOT_ANNOTATED_CDS"/>
    <property type="molecule type" value="mRNA"/>
</dbReference>
<dbReference type="EMBL" id="AK025632">
    <property type="protein sequence ID" value="BAB15196.1"/>
    <property type="status" value="ALT_SEQ"/>
    <property type="molecule type" value="mRNA"/>
</dbReference>
<dbReference type="EMBL" id="AF273044">
    <property type="protein sequence ID" value="AAG34904.1"/>
    <property type="status" value="ALT_SEQ"/>
    <property type="molecule type" value="mRNA"/>
</dbReference>
<dbReference type="EMBL" id="BK005587">
    <property type="protein sequence ID" value="DAA05591.1"/>
    <property type="molecule type" value="mRNA"/>
</dbReference>
<dbReference type="CCDS" id="CCDS55858.1"/>
<dbReference type="RefSeq" id="NP_079390.3">
    <property type="nucleotide sequence ID" value="NM_025114.4"/>
</dbReference>
<dbReference type="SMR" id="O15078"/>
<dbReference type="BioGRID" id="123163">
    <property type="interactions" value="169"/>
</dbReference>
<dbReference type="ComplexPortal" id="CPX-2536">
    <property type="entry name" value="CEP290-NPHP5 transition zone complex"/>
</dbReference>
<dbReference type="CORUM" id="O15078"/>
<dbReference type="DIP" id="DIP-46541N"/>
<dbReference type="FunCoup" id="O15078">
    <property type="interactions" value="1759"/>
</dbReference>
<dbReference type="IntAct" id="O15078">
    <property type="interactions" value="145"/>
</dbReference>
<dbReference type="MINT" id="O15078"/>
<dbReference type="STRING" id="9606.ENSP00000448012"/>
<dbReference type="iPTMnet" id="O15078"/>
<dbReference type="PhosphoSitePlus" id="O15078"/>
<dbReference type="BioMuta" id="CEP290"/>
<dbReference type="jPOST" id="O15078"/>
<dbReference type="MassIVE" id="O15078"/>
<dbReference type="PaxDb" id="9606-ENSP00000448012"/>
<dbReference type="PeptideAtlas" id="O15078"/>
<dbReference type="Pumba" id="O15078"/>
<dbReference type="Antibodypedia" id="29900">
    <property type="antibodies" value="260 antibodies from 34 providers"/>
</dbReference>
<dbReference type="DNASU" id="80184"/>
<dbReference type="Ensembl" id="ENST00000552810.6">
    <property type="protein sequence ID" value="ENSP00000448012.1"/>
    <property type="gene ID" value="ENSG00000198707.17"/>
</dbReference>
<dbReference type="GeneID" id="80184"/>
<dbReference type="KEGG" id="hsa:80184"/>
<dbReference type="MANE-Select" id="ENST00000552810.6">
    <property type="protein sequence ID" value="ENSP00000448012.1"/>
    <property type="RefSeq nucleotide sequence ID" value="NM_025114.4"/>
    <property type="RefSeq protein sequence ID" value="NP_079390.3"/>
</dbReference>
<dbReference type="UCSC" id="uc001taq.4">
    <property type="organism name" value="human"/>
</dbReference>
<dbReference type="AGR" id="HGNC:29021"/>
<dbReference type="CTD" id="80184"/>
<dbReference type="DisGeNET" id="80184"/>
<dbReference type="GeneCards" id="CEP290"/>
<dbReference type="GeneReviews" id="CEP290"/>
<dbReference type="HGNC" id="HGNC:29021">
    <property type="gene designation" value="CEP290"/>
</dbReference>
<dbReference type="HPA" id="ENSG00000198707">
    <property type="expression patterns" value="Low tissue specificity"/>
</dbReference>
<dbReference type="MalaCards" id="CEP290"/>
<dbReference type="MIM" id="610142">
    <property type="type" value="gene"/>
</dbReference>
<dbReference type="MIM" id="610188">
    <property type="type" value="phenotype"/>
</dbReference>
<dbReference type="MIM" id="610189">
    <property type="type" value="phenotype"/>
</dbReference>
<dbReference type="MIM" id="611134">
    <property type="type" value="phenotype"/>
</dbReference>
<dbReference type="MIM" id="611755">
    <property type="type" value="phenotype"/>
</dbReference>
<dbReference type="MIM" id="615991">
    <property type="type" value="phenotype"/>
</dbReference>
<dbReference type="neXtProt" id="NX_O15078"/>
<dbReference type="OpenTargets" id="ENSG00000198707"/>
<dbReference type="Orphanet" id="110">
    <property type="disease" value="Bardet-Biedl syndrome"/>
</dbReference>
<dbReference type="Orphanet" id="2318">
    <property type="disease" value="Joubert syndrome with oculorenal defect"/>
</dbReference>
<dbReference type="Orphanet" id="65">
    <property type="disease" value="Leber congenital amaurosis"/>
</dbReference>
<dbReference type="Orphanet" id="564">
    <property type="disease" value="Meckel syndrome"/>
</dbReference>
<dbReference type="Orphanet" id="3156">
    <property type="disease" value="Senior-Loken syndrome"/>
</dbReference>
<dbReference type="PharmGKB" id="PA143485433"/>
<dbReference type="VEuPathDB" id="HostDB:ENSG00000198707"/>
<dbReference type="eggNOG" id="ENOG502QPTZ">
    <property type="taxonomic scope" value="Eukaryota"/>
</dbReference>
<dbReference type="GeneTree" id="ENSGT00730000111039"/>
<dbReference type="HOGENOM" id="CLU_246874_0_0_1"/>
<dbReference type="InParanoid" id="O15078"/>
<dbReference type="OMA" id="RIEMQQR"/>
<dbReference type="OrthoDB" id="6351660at2759"/>
<dbReference type="PAN-GO" id="O15078">
    <property type="GO annotations" value="7 GO annotations based on evolutionary models"/>
</dbReference>
<dbReference type="PhylomeDB" id="O15078"/>
<dbReference type="TreeFam" id="TF326911"/>
<dbReference type="PathwayCommons" id="O15078"/>
<dbReference type="Reactome" id="R-HSA-2565942">
    <property type="pathway name" value="Regulation of PLK1 Activity at G2/M Transition"/>
</dbReference>
<dbReference type="Reactome" id="R-HSA-380259">
    <property type="pathway name" value="Loss of Nlp from mitotic centrosomes"/>
</dbReference>
<dbReference type="Reactome" id="R-HSA-380270">
    <property type="pathway name" value="Recruitment of mitotic centrosome proteins and complexes"/>
</dbReference>
<dbReference type="Reactome" id="R-HSA-380284">
    <property type="pathway name" value="Loss of proteins required for interphase microtubule organization from the centrosome"/>
</dbReference>
<dbReference type="Reactome" id="R-HSA-380320">
    <property type="pathway name" value="Recruitment of NuMA to mitotic centrosomes"/>
</dbReference>
<dbReference type="Reactome" id="R-HSA-5620912">
    <property type="pathway name" value="Anchoring of the basal body to the plasma membrane"/>
</dbReference>
<dbReference type="Reactome" id="R-HSA-6798695">
    <property type="pathway name" value="Neutrophil degranulation"/>
</dbReference>
<dbReference type="Reactome" id="R-HSA-8854518">
    <property type="pathway name" value="AURKA Activation by TPX2"/>
</dbReference>
<dbReference type="SignaLink" id="O15078"/>
<dbReference type="SIGNOR" id="O15078"/>
<dbReference type="BioGRID-ORCS" id="80184">
    <property type="hits" value="50 hits in 1163 CRISPR screens"/>
</dbReference>
<dbReference type="CD-CODE" id="8C2F96ED">
    <property type="entry name" value="Centrosome"/>
</dbReference>
<dbReference type="ChiTaRS" id="CEP290">
    <property type="organism name" value="human"/>
</dbReference>
<dbReference type="GeneWiki" id="CEP290"/>
<dbReference type="GenomeRNAi" id="80184"/>
<dbReference type="Pharos" id="O15078">
    <property type="development level" value="Tbio"/>
</dbReference>
<dbReference type="PRO" id="PR:O15078"/>
<dbReference type="Proteomes" id="UP000005640">
    <property type="component" value="Chromosome 12"/>
</dbReference>
<dbReference type="RNAct" id="O15078">
    <property type="molecule type" value="protein"/>
</dbReference>
<dbReference type="Bgee" id="ENSG00000198707">
    <property type="expression patterns" value="Expressed in right uterine tube and 188 other cell types or tissues"/>
</dbReference>
<dbReference type="ExpressionAtlas" id="O15078">
    <property type="expression patterns" value="baseline and differential"/>
</dbReference>
<dbReference type="GO" id="GO:0034451">
    <property type="term" value="C:centriolar satellite"/>
    <property type="evidence" value="ECO:0000314"/>
    <property type="project" value="UniProtKB"/>
</dbReference>
<dbReference type="GO" id="GO:0005814">
    <property type="term" value="C:centriole"/>
    <property type="evidence" value="ECO:0000314"/>
    <property type="project" value="UniProtKB"/>
</dbReference>
<dbReference type="GO" id="GO:0005813">
    <property type="term" value="C:centrosome"/>
    <property type="evidence" value="ECO:0000314"/>
    <property type="project" value="UniProtKB"/>
</dbReference>
<dbReference type="GO" id="GO:0036064">
    <property type="term" value="C:ciliary basal body"/>
    <property type="evidence" value="ECO:0007669"/>
    <property type="project" value="Ensembl"/>
</dbReference>
<dbReference type="GO" id="GO:0035869">
    <property type="term" value="C:ciliary transition zone"/>
    <property type="evidence" value="ECO:0000314"/>
    <property type="project" value="UniProtKB"/>
</dbReference>
<dbReference type="GO" id="GO:0005737">
    <property type="term" value="C:cytoplasm"/>
    <property type="evidence" value="ECO:0000314"/>
    <property type="project" value="UniProtKB"/>
</dbReference>
<dbReference type="GO" id="GO:0005829">
    <property type="term" value="C:cytosol"/>
    <property type="evidence" value="ECO:0000314"/>
    <property type="project" value="HGNC-UCL"/>
</dbReference>
<dbReference type="GO" id="GO:0005576">
    <property type="term" value="C:extracellular region"/>
    <property type="evidence" value="ECO:0000304"/>
    <property type="project" value="Reactome"/>
</dbReference>
<dbReference type="GO" id="GO:0016020">
    <property type="term" value="C:membrane"/>
    <property type="evidence" value="ECO:0007005"/>
    <property type="project" value="UniProtKB"/>
</dbReference>
<dbReference type="GO" id="GO:0036038">
    <property type="term" value="C:MKS complex"/>
    <property type="evidence" value="ECO:0000250"/>
    <property type="project" value="UniProtKB"/>
</dbReference>
<dbReference type="GO" id="GO:0005634">
    <property type="term" value="C:nucleus"/>
    <property type="evidence" value="ECO:0000314"/>
    <property type="project" value="HGNC-UCL"/>
</dbReference>
<dbReference type="GO" id="GO:0032391">
    <property type="term" value="C:photoreceptor connecting cilium"/>
    <property type="evidence" value="ECO:0000250"/>
    <property type="project" value="UniProtKB"/>
</dbReference>
<dbReference type="GO" id="GO:0032991">
    <property type="term" value="C:protein-containing complex"/>
    <property type="evidence" value="ECO:0000314"/>
    <property type="project" value="MGI"/>
</dbReference>
<dbReference type="GO" id="GO:0035580">
    <property type="term" value="C:specific granule lumen"/>
    <property type="evidence" value="ECO:0000304"/>
    <property type="project" value="Reactome"/>
</dbReference>
<dbReference type="GO" id="GO:0042802">
    <property type="term" value="F:identical protein binding"/>
    <property type="evidence" value="ECO:0000353"/>
    <property type="project" value="IntAct"/>
</dbReference>
<dbReference type="GO" id="GO:0043010">
    <property type="term" value="P:camera-type eye development"/>
    <property type="evidence" value="ECO:0000318"/>
    <property type="project" value="GO_Central"/>
</dbReference>
<dbReference type="GO" id="GO:0097711">
    <property type="term" value="P:ciliary basal body-plasma membrane docking"/>
    <property type="evidence" value="ECO:0000318"/>
    <property type="project" value="GO_Central"/>
</dbReference>
<dbReference type="GO" id="GO:1905349">
    <property type="term" value="P:ciliary transition zone assembly"/>
    <property type="evidence" value="ECO:0000318"/>
    <property type="project" value="GO_Central"/>
</dbReference>
<dbReference type="GO" id="GO:0060271">
    <property type="term" value="P:cilium assembly"/>
    <property type="evidence" value="ECO:0000314"/>
    <property type="project" value="UniProtKB"/>
</dbReference>
<dbReference type="GO" id="GO:0042462">
    <property type="term" value="P:eye photoreceptor cell development"/>
    <property type="evidence" value="ECO:0000250"/>
    <property type="project" value="HGNC-UCL"/>
</dbReference>
<dbReference type="GO" id="GO:0030902">
    <property type="term" value="P:hindbrain development"/>
    <property type="evidence" value="ECO:0000250"/>
    <property type="project" value="HGNC-UCL"/>
</dbReference>
<dbReference type="GO" id="GO:0001822">
    <property type="term" value="P:kidney development"/>
    <property type="evidence" value="ECO:0000318"/>
    <property type="project" value="GO_Central"/>
</dbReference>
<dbReference type="GO" id="GO:1905515">
    <property type="term" value="P:non-motile cilium assembly"/>
    <property type="evidence" value="ECO:0000318"/>
    <property type="project" value="GO_Central"/>
</dbReference>
<dbReference type="GO" id="GO:0030916">
    <property type="term" value="P:otic vesicle formation"/>
    <property type="evidence" value="ECO:0000250"/>
    <property type="project" value="HGNC-UCL"/>
</dbReference>
<dbReference type="GO" id="GO:0045893">
    <property type="term" value="P:positive regulation of DNA-templated transcription"/>
    <property type="evidence" value="ECO:0000314"/>
    <property type="project" value="HGNC-UCL"/>
</dbReference>
<dbReference type="GO" id="GO:0090316">
    <property type="term" value="P:positive regulation of intracellular protein transport"/>
    <property type="evidence" value="ECO:0000315"/>
    <property type="project" value="UniProtKB"/>
</dbReference>
<dbReference type="GO" id="GO:0048793">
    <property type="term" value="P:pronephros development"/>
    <property type="evidence" value="ECO:0000250"/>
    <property type="project" value="HGNC-UCL"/>
</dbReference>
<dbReference type="GO" id="GO:0015031">
    <property type="term" value="P:protein transport"/>
    <property type="evidence" value="ECO:0000250"/>
    <property type="project" value="UniProtKB"/>
</dbReference>
<dbReference type="GO" id="GO:0070201">
    <property type="term" value="P:regulation of establishment of protein localization"/>
    <property type="evidence" value="ECO:0000315"/>
    <property type="project" value="MGI"/>
</dbReference>
<dbReference type="InterPro" id="IPR032321">
    <property type="entry name" value="Cep209_CC5"/>
</dbReference>
<dbReference type="InterPro" id="IPR026201">
    <property type="entry name" value="Cep290"/>
</dbReference>
<dbReference type="PANTHER" id="PTHR18879">
    <property type="entry name" value="CENTROSOMAL PROTEIN OF 290 KDA"/>
    <property type="match status" value="1"/>
</dbReference>
<dbReference type="PANTHER" id="PTHR18879:SF20">
    <property type="entry name" value="CENTROSOMAL PROTEIN OF 290 KDA"/>
    <property type="match status" value="1"/>
</dbReference>
<dbReference type="Pfam" id="PF16574">
    <property type="entry name" value="CEP209_CC5"/>
    <property type="match status" value="1"/>
</dbReference>
<name>CE290_HUMAN</name>
<keyword id="KW-0010">Activator</keyword>
<keyword id="KW-0083">Bardet-Biedl syndrome</keyword>
<keyword id="KW-0966">Cell projection</keyword>
<keyword id="KW-1186">Ciliopathy</keyword>
<keyword id="KW-0969">Cilium</keyword>
<keyword id="KW-0970">Cilium biogenesis/degradation</keyword>
<keyword id="KW-0175">Coiled coil</keyword>
<keyword id="KW-0963">Cytoplasm</keyword>
<keyword id="KW-0968">Cytoplasmic vesicle</keyword>
<keyword id="KW-0206">Cytoskeleton</keyword>
<keyword id="KW-0225">Disease variant</keyword>
<keyword id="KW-0991">Intellectual disability</keyword>
<keyword id="KW-0979">Joubert syndrome</keyword>
<keyword id="KW-0901">Leber congenital amaurosis</keyword>
<keyword id="KW-0981">Meckel syndrome</keyword>
<keyword id="KW-0983">Nephronophthisis</keyword>
<keyword id="KW-0539">Nucleus</keyword>
<keyword id="KW-0550">Obesity</keyword>
<keyword id="KW-0653">Protein transport</keyword>
<keyword id="KW-1267">Proteomics identification</keyword>
<keyword id="KW-1185">Reference proteome</keyword>
<keyword id="KW-0980">Senior-Loken syndrome</keyword>
<keyword id="KW-0813">Transport</keyword>
<keyword id="KW-0832">Ubl conjugation</keyword>